<comment type="subunit">
    <text evidence="1">Part of the 50S ribosomal subunit.</text>
</comment>
<comment type="similarity">
    <text evidence="1">Belongs to the universal ribosomal protein uL30 family.</text>
</comment>
<sequence>MAKLKITLKKSTNKAVKSQAATVKALGLGKIGTTVEQNDNPQIRGMIRKVSHLVCVEEI</sequence>
<gene>
    <name evidence="1" type="primary">rpmD</name>
    <name type="ordered locus">Ccel_0776</name>
</gene>
<protein>
    <recommendedName>
        <fullName evidence="1">Large ribosomal subunit protein uL30</fullName>
    </recommendedName>
    <alternativeName>
        <fullName evidence="2">50S ribosomal protein L30</fullName>
    </alternativeName>
</protein>
<reference key="1">
    <citation type="submission" date="2009-01" db="EMBL/GenBank/DDBJ databases">
        <title>Complete sequence of Clostridium cellulolyticum H10.</title>
        <authorList>
            <consortium name="US DOE Joint Genome Institute"/>
            <person name="Lucas S."/>
            <person name="Copeland A."/>
            <person name="Lapidus A."/>
            <person name="Glavina del Rio T."/>
            <person name="Dalin E."/>
            <person name="Tice H."/>
            <person name="Bruce D."/>
            <person name="Goodwin L."/>
            <person name="Pitluck S."/>
            <person name="Chertkov O."/>
            <person name="Saunders E."/>
            <person name="Brettin T."/>
            <person name="Detter J.C."/>
            <person name="Han C."/>
            <person name="Larimer F."/>
            <person name="Land M."/>
            <person name="Hauser L."/>
            <person name="Kyrpides N."/>
            <person name="Ivanova N."/>
            <person name="Zhou J."/>
            <person name="Richardson P."/>
        </authorList>
    </citation>
    <scope>NUCLEOTIDE SEQUENCE [LARGE SCALE GENOMIC DNA]</scope>
    <source>
        <strain>ATCC 35319 / DSM 5812 / JCM 6584 / H10</strain>
    </source>
</reference>
<keyword id="KW-1185">Reference proteome</keyword>
<keyword id="KW-0687">Ribonucleoprotein</keyword>
<keyword id="KW-0689">Ribosomal protein</keyword>
<organism>
    <name type="scientific">Ruminiclostridium cellulolyticum (strain ATCC 35319 / DSM 5812 / JCM 6584 / H10)</name>
    <name type="common">Clostridium cellulolyticum</name>
    <dbReference type="NCBI Taxonomy" id="394503"/>
    <lineage>
        <taxon>Bacteria</taxon>
        <taxon>Bacillati</taxon>
        <taxon>Bacillota</taxon>
        <taxon>Clostridia</taxon>
        <taxon>Eubacteriales</taxon>
        <taxon>Oscillospiraceae</taxon>
        <taxon>Ruminiclostridium</taxon>
    </lineage>
</organism>
<feature type="chain" id="PRO_1000184136" description="Large ribosomal subunit protein uL30">
    <location>
        <begin position="1"/>
        <end position="59"/>
    </location>
</feature>
<proteinExistence type="inferred from homology"/>
<accession>B8I7Z7</accession>
<dbReference type="EMBL" id="CP001348">
    <property type="protein sequence ID" value="ACL75154.1"/>
    <property type="molecule type" value="Genomic_DNA"/>
</dbReference>
<dbReference type="RefSeq" id="WP_014312126.1">
    <property type="nucleotide sequence ID" value="NC_011898.1"/>
</dbReference>
<dbReference type="SMR" id="B8I7Z7"/>
<dbReference type="STRING" id="394503.Ccel_0776"/>
<dbReference type="KEGG" id="cce:Ccel_0776"/>
<dbReference type="eggNOG" id="COG1841">
    <property type="taxonomic scope" value="Bacteria"/>
</dbReference>
<dbReference type="HOGENOM" id="CLU_131047_2_1_9"/>
<dbReference type="OrthoDB" id="9812790at2"/>
<dbReference type="Proteomes" id="UP000001349">
    <property type="component" value="Chromosome"/>
</dbReference>
<dbReference type="GO" id="GO:0022625">
    <property type="term" value="C:cytosolic large ribosomal subunit"/>
    <property type="evidence" value="ECO:0007669"/>
    <property type="project" value="TreeGrafter"/>
</dbReference>
<dbReference type="GO" id="GO:0003735">
    <property type="term" value="F:structural constituent of ribosome"/>
    <property type="evidence" value="ECO:0007669"/>
    <property type="project" value="InterPro"/>
</dbReference>
<dbReference type="GO" id="GO:0006412">
    <property type="term" value="P:translation"/>
    <property type="evidence" value="ECO:0007669"/>
    <property type="project" value="UniProtKB-UniRule"/>
</dbReference>
<dbReference type="CDD" id="cd01658">
    <property type="entry name" value="Ribosomal_L30"/>
    <property type="match status" value="1"/>
</dbReference>
<dbReference type="FunFam" id="3.30.1390.20:FF:000001">
    <property type="entry name" value="50S ribosomal protein L30"/>
    <property type="match status" value="1"/>
</dbReference>
<dbReference type="Gene3D" id="3.30.1390.20">
    <property type="entry name" value="Ribosomal protein L30, ferredoxin-like fold domain"/>
    <property type="match status" value="1"/>
</dbReference>
<dbReference type="HAMAP" id="MF_01371_B">
    <property type="entry name" value="Ribosomal_uL30_B"/>
    <property type="match status" value="1"/>
</dbReference>
<dbReference type="InterPro" id="IPR036919">
    <property type="entry name" value="Ribo_uL30_ferredoxin-like_sf"/>
</dbReference>
<dbReference type="InterPro" id="IPR005996">
    <property type="entry name" value="Ribosomal_uL30_bac-type"/>
</dbReference>
<dbReference type="InterPro" id="IPR018038">
    <property type="entry name" value="Ribosomal_uL30_CS"/>
</dbReference>
<dbReference type="InterPro" id="IPR016082">
    <property type="entry name" value="Ribosomal_uL30_ferredoxin-like"/>
</dbReference>
<dbReference type="NCBIfam" id="TIGR01308">
    <property type="entry name" value="rpmD_bact"/>
    <property type="match status" value="1"/>
</dbReference>
<dbReference type="PANTHER" id="PTHR15892:SF2">
    <property type="entry name" value="LARGE RIBOSOMAL SUBUNIT PROTEIN UL30M"/>
    <property type="match status" value="1"/>
</dbReference>
<dbReference type="PANTHER" id="PTHR15892">
    <property type="entry name" value="MITOCHONDRIAL RIBOSOMAL PROTEIN L30"/>
    <property type="match status" value="1"/>
</dbReference>
<dbReference type="Pfam" id="PF00327">
    <property type="entry name" value="Ribosomal_L30"/>
    <property type="match status" value="1"/>
</dbReference>
<dbReference type="PIRSF" id="PIRSF002211">
    <property type="entry name" value="Ribosomal_L30_bac-type"/>
    <property type="match status" value="1"/>
</dbReference>
<dbReference type="SUPFAM" id="SSF55129">
    <property type="entry name" value="Ribosomal protein L30p/L7e"/>
    <property type="match status" value="1"/>
</dbReference>
<dbReference type="PROSITE" id="PS00634">
    <property type="entry name" value="RIBOSOMAL_L30"/>
    <property type="match status" value="1"/>
</dbReference>
<name>RL30_RUMCH</name>
<evidence type="ECO:0000255" key="1">
    <source>
        <dbReference type="HAMAP-Rule" id="MF_01371"/>
    </source>
</evidence>
<evidence type="ECO:0000305" key="2"/>